<organism>
    <name type="scientific">Staphylococcus aureus (strain USA300)</name>
    <dbReference type="NCBI Taxonomy" id="367830"/>
    <lineage>
        <taxon>Bacteria</taxon>
        <taxon>Bacillati</taxon>
        <taxon>Bacillota</taxon>
        <taxon>Bacilli</taxon>
        <taxon>Bacillales</taxon>
        <taxon>Staphylococcaceae</taxon>
        <taxon>Staphylococcus</taxon>
    </lineage>
</organism>
<protein>
    <recommendedName>
        <fullName>Alanine dehydrogenase 1</fullName>
        <ecNumber>1.4.1.1</ecNumber>
    </recommendedName>
</protein>
<gene>
    <name type="primary">ald1</name>
    <name type="ordered locus">SAUSA300_1331</name>
</gene>
<feature type="chain" id="PRO_0000287322" description="Alanine dehydrogenase 1">
    <location>
        <begin position="1"/>
        <end position="372"/>
    </location>
</feature>
<feature type="active site" evidence="2">
    <location>
        <position position="94"/>
    </location>
</feature>
<feature type="binding site" evidence="1">
    <location>
        <begin position="170"/>
        <end position="200"/>
    </location>
    <ligand>
        <name>NAD(+)</name>
        <dbReference type="ChEBI" id="CHEBI:57540"/>
    </ligand>
</feature>
<dbReference type="EC" id="1.4.1.1"/>
<dbReference type="EMBL" id="CP000255">
    <property type="protein sequence ID" value="ABD21351.1"/>
    <property type="molecule type" value="Genomic_DNA"/>
</dbReference>
<dbReference type="SMR" id="Q2FH00"/>
<dbReference type="KEGG" id="saa:SAUSA300_1331"/>
<dbReference type="HOGENOM" id="CLU_003376_3_0_9"/>
<dbReference type="OMA" id="MVAANHY"/>
<dbReference type="UniPathway" id="UPA00527">
    <property type="reaction ID" value="UER00585"/>
</dbReference>
<dbReference type="Proteomes" id="UP000001939">
    <property type="component" value="Chromosome"/>
</dbReference>
<dbReference type="GO" id="GO:0005886">
    <property type="term" value="C:plasma membrane"/>
    <property type="evidence" value="ECO:0007669"/>
    <property type="project" value="TreeGrafter"/>
</dbReference>
<dbReference type="GO" id="GO:0000286">
    <property type="term" value="F:alanine dehydrogenase activity"/>
    <property type="evidence" value="ECO:0007669"/>
    <property type="project" value="UniProtKB-EC"/>
</dbReference>
<dbReference type="GO" id="GO:0042853">
    <property type="term" value="P:L-alanine catabolic process"/>
    <property type="evidence" value="ECO:0007669"/>
    <property type="project" value="UniProtKB-UniPathway"/>
</dbReference>
<dbReference type="CDD" id="cd05305">
    <property type="entry name" value="L-AlaDH"/>
    <property type="match status" value="1"/>
</dbReference>
<dbReference type="FunFam" id="3.40.50.720:FF:000433">
    <property type="entry name" value="Alanine dehydrogenase 1"/>
    <property type="match status" value="1"/>
</dbReference>
<dbReference type="Gene3D" id="3.40.50.720">
    <property type="entry name" value="NAD(P)-binding Rossmann-like Domain"/>
    <property type="match status" value="2"/>
</dbReference>
<dbReference type="InterPro" id="IPR008141">
    <property type="entry name" value="Ala_DH"/>
</dbReference>
<dbReference type="InterPro" id="IPR008143">
    <property type="entry name" value="Ala_DH/PNT_CS2"/>
</dbReference>
<dbReference type="InterPro" id="IPR008142">
    <property type="entry name" value="AlaDH/PNT_CS1"/>
</dbReference>
<dbReference type="InterPro" id="IPR007886">
    <property type="entry name" value="AlaDH/PNT_N"/>
</dbReference>
<dbReference type="InterPro" id="IPR007698">
    <property type="entry name" value="AlaDH/PNT_NAD(H)-bd"/>
</dbReference>
<dbReference type="InterPro" id="IPR036291">
    <property type="entry name" value="NAD(P)-bd_dom_sf"/>
</dbReference>
<dbReference type="NCBIfam" id="TIGR00518">
    <property type="entry name" value="alaDH"/>
    <property type="match status" value="1"/>
</dbReference>
<dbReference type="PANTHER" id="PTHR42795">
    <property type="entry name" value="ALANINE DEHYDROGENASE"/>
    <property type="match status" value="1"/>
</dbReference>
<dbReference type="PANTHER" id="PTHR42795:SF1">
    <property type="entry name" value="ALANINE DEHYDROGENASE"/>
    <property type="match status" value="1"/>
</dbReference>
<dbReference type="Pfam" id="PF01262">
    <property type="entry name" value="AlaDh_PNT_C"/>
    <property type="match status" value="1"/>
</dbReference>
<dbReference type="Pfam" id="PF05222">
    <property type="entry name" value="AlaDh_PNT_N"/>
    <property type="match status" value="1"/>
</dbReference>
<dbReference type="PIRSF" id="PIRSF000183">
    <property type="entry name" value="Alanine_dh"/>
    <property type="match status" value="1"/>
</dbReference>
<dbReference type="SMART" id="SM01002">
    <property type="entry name" value="AlaDh_PNT_C"/>
    <property type="match status" value="1"/>
</dbReference>
<dbReference type="SMART" id="SM01003">
    <property type="entry name" value="AlaDh_PNT_N"/>
    <property type="match status" value="1"/>
</dbReference>
<dbReference type="SUPFAM" id="SSF52283">
    <property type="entry name" value="Formate/glycerate dehydrogenase catalytic domain-like"/>
    <property type="match status" value="1"/>
</dbReference>
<dbReference type="SUPFAM" id="SSF51735">
    <property type="entry name" value="NAD(P)-binding Rossmann-fold domains"/>
    <property type="match status" value="1"/>
</dbReference>
<dbReference type="PROSITE" id="PS00836">
    <property type="entry name" value="ALADH_PNT_1"/>
    <property type="match status" value="1"/>
</dbReference>
<dbReference type="PROSITE" id="PS00837">
    <property type="entry name" value="ALADH_PNT_2"/>
    <property type="match status" value="1"/>
</dbReference>
<evidence type="ECO:0000250" key="1"/>
<evidence type="ECO:0000255" key="2"/>
<evidence type="ECO:0000305" key="3"/>
<name>DHA1_STAA3</name>
<reference key="1">
    <citation type="journal article" date="2006" name="Lancet">
        <title>Complete genome sequence of USA300, an epidemic clone of community-acquired meticillin-resistant Staphylococcus aureus.</title>
        <authorList>
            <person name="Diep B.A."/>
            <person name="Gill S.R."/>
            <person name="Chang R.F."/>
            <person name="Phan T.H."/>
            <person name="Chen J.H."/>
            <person name="Davidson M.G."/>
            <person name="Lin F."/>
            <person name="Lin J."/>
            <person name="Carleton H.A."/>
            <person name="Mongodin E.F."/>
            <person name="Sensabaugh G.F."/>
            <person name="Perdreau-Remington F."/>
        </authorList>
    </citation>
    <scope>NUCLEOTIDE SEQUENCE [LARGE SCALE GENOMIC DNA]</scope>
    <source>
        <strain>USA300</strain>
    </source>
</reference>
<accession>Q2FH00</accession>
<keyword id="KW-0520">NAD</keyword>
<keyword id="KW-0560">Oxidoreductase</keyword>
<sequence length="372" mass="40235">MLVAVVKELKQGEGRVACTPENVRKLTDAGHKVIVEKNAGIGSGFSNDMYEKEGAKIVTHEQAWEADLVIKVKEPHESEYQYFKKNQIIWGFLHLASSKEIVEKMQEVGVTAISGETIIKNGKAELLAPMSAIAGQRSAIMGAYYSEAQHGGQGTLVTGVHENVDIPGSTYVIFGGGVAATNAANVALGLNAKVIIIELNDDRIKYLEDMYAEKDVTVVKSTPENLAEQIKKADVFISTILIPGAKPPKLVTREMVKSMKKGSVLIDIAIDQGGTIETIRPTTISDPVYEEEGVIHYGVPNQPGAVPRTSTMALAQGNIDYILEICDKGLEQAIKDNEALSTGVNIYQGQVTNQGLASSHDLDYKEILNVIE</sequence>
<comment type="function">
    <text evidence="1">May play a role in cell wall synthesis as L-alanine is an important constituent of the peptidoglycan layer.</text>
</comment>
<comment type="catalytic activity">
    <reaction>
        <text>L-alanine + NAD(+) + H2O = pyruvate + NH4(+) + NADH + H(+)</text>
        <dbReference type="Rhea" id="RHEA:18405"/>
        <dbReference type="ChEBI" id="CHEBI:15361"/>
        <dbReference type="ChEBI" id="CHEBI:15377"/>
        <dbReference type="ChEBI" id="CHEBI:15378"/>
        <dbReference type="ChEBI" id="CHEBI:28938"/>
        <dbReference type="ChEBI" id="CHEBI:57540"/>
        <dbReference type="ChEBI" id="CHEBI:57945"/>
        <dbReference type="ChEBI" id="CHEBI:57972"/>
        <dbReference type="EC" id="1.4.1.1"/>
    </reaction>
</comment>
<comment type="pathway">
    <text>Amino-acid degradation; L-alanine degradation via dehydrogenase pathway; NH(3) and pyruvate from L-alanine: step 1/1.</text>
</comment>
<comment type="similarity">
    <text evidence="3">Belongs to the AlaDH/PNT family.</text>
</comment>
<proteinExistence type="inferred from homology"/>